<gene>
    <name type="primary">PAM17</name>
    <name type="ordered locus">CAGL0M05929g</name>
</gene>
<proteinExistence type="inferred from homology"/>
<protein>
    <recommendedName>
        <fullName>Presequence translocated-associated motor subunit PAM17, mitochondrial</fullName>
    </recommendedName>
</protein>
<name>PAM17_CANGA</name>
<keyword id="KW-0472">Membrane</keyword>
<keyword id="KW-0496">Mitochondrion</keyword>
<keyword id="KW-0999">Mitochondrion inner membrane</keyword>
<keyword id="KW-0653">Protein transport</keyword>
<keyword id="KW-1185">Reference proteome</keyword>
<keyword id="KW-0809">Transit peptide</keyword>
<keyword id="KW-0811">Translocation</keyword>
<keyword id="KW-0812">Transmembrane</keyword>
<keyword id="KW-1133">Transmembrane helix</keyword>
<keyword id="KW-0813">Transport</keyword>
<sequence length="186" mass="20953">MLSITQGIVRRSVARPGLIRPLVKCNARYYSDKPEDSLTWTDFFQLRKQERRINVGSSVFTALVGANVSWAYLSTMEIDPTQMIFGFDPLVVVTAGLMASGALGYLMGPAVGSQVFKLTKGNKLAQYNLKNKEFLKHVIQNRVDASSQSFSNPVPDYYGEKIGSVKEYRQWLRDCHAYAKKAKEFL</sequence>
<comment type="function">
    <text evidence="1">Component of the PAM complex, a complex required for the translocation of transit peptide-containing proteins from the inner membrane into the mitochondrial matrix in an ATP-dependent manner.</text>
</comment>
<comment type="subunit">
    <text evidence="1">Component of the PAM complex, at least composed of mtHsp70 (SSC1), MGE1, TIM44, PAM16, PAM17 and PAM18.</text>
</comment>
<comment type="subcellular location">
    <subcellularLocation>
        <location evidence="1">Mitochondrion inner membrane</location>
        <topology evidence="1">Multi-pass membrane protein</topology>
    </subcellularLocation>
</comment>
<comment type="similarity">
    <text evidence="3">Belongs to the PAM17 family.</text>
</comment>
<accession>Q6FJJ0</accession>
<dbReference type="EMBL" id="CR380959">
    <property type="protein sequence ID" value="CAG62580.1"/>
    <property type="molecule type" value="Genomic_DNA"/>
</dbReference>
<dbReference type="RefSeq" id="XP_449604.1">
    <property type="nucleotide sequence ID" value="XM_449604.1"/>
</dbReference>
<dbReference type="FunCoup" id="Q6FJJ0">
    <property type="interactions" value="66"/>
</dbReference>
<dbReference type="STRING" id="284593.Q6FJJ0"/>
<dbReference type="EnsemblFungi" id="CAGL0M05929g-T">
    <property type="protein sequence ID" value="CAGL0M05929g-T-p1"/>
    <property type="gene ID" value="CAGL0M05929g"/>
</dbReference>
<dbReference type="KEGG" id="cgr:2891652"/>
<dbReference type="CGD" id="CAL0136843">
    <property type="gene designation" value="CAGL0M05929g"/>
</dbReference>
<dbReference type="VEuPathDB" id="FungiDB:B1J91_M05929g"/>
<dbReference type="VEuPathDB" id="FungiDB:CAGL0M05929g"/>
<dbReference type="eggNOG" id="ENOG502S1B1">
    <property type="taxonomic scope" value="Eukaryota"/>
</dbReference>
<dbReference type="HOGENOM" id="CLU_068297_2_0_1"/>
<dbReference type="InParanoid" id="Q6FJJ0"/>
<dbReference type="OMA" id="MIFGFDP"/>
<dbReference type="Proteomes" id="UP000002428">
    <property type="component" value="Chromosome M"/>
</dbReference>
<dbReference type="GO" id="GO:0001405">
    <property type="term" value="C:PAM complex, Tim23 associated import motor"/>
    <property type="evidence" value="ECO:0007669"/>
    <property type="project" value="EnsemblFungi"/>
</dbReference>
<dbReference type="GO" id="GO:0030150">
    <property type="term" value="P:protein import into mitochondrial matrix"/>
    <property type="evidence" value="ECO:0007669"/>
    <property type="project" value="EnsemblFungi"/>
</dbReference>
<dbReference type="InterPro" id="IPR013875">
    <property type="entry name" value="Pam17"/>
</dbReference>
<dbReference type="PANTHER" id="PTHR28021">
    <property type="entry name" value="PRESEQUENCE TRANSLOCATED-ASSOCIATED MOTOR SUBUNIT PAM17, MITOCHONDRIAL"/>
    <property type="match status" value="1"/>
</dbReference>
<dbReference type="PANTHER" id="PTHR28021:SF1">
    <property type="entry name" value="PRESEQUENCE TRANSLOCATED-ASSOCIATED MOTOR SUBUNIT PAM17, MITOCHONDRIAL"/>
    <property type="match status" value="1"/>
</dbReference>
<dbReference type="Pfam" id="PF08566">
    <property type="entry name" value="Pam17"/>
    <property type="match status" value="1"/>
</dbReference>
<evidence type="ECO:0000250" key="1"/>
<evidence type="ECO:0000255" key="2"/>
<evidence type="ECO:0000305" key="3"/>
<feature type="transit peptide" description="Mitochondrion" evidence="2">
    <location>
        <begin position="1"/>
        <end position="30"/>
    </location>
</feature>
<feature type="chain" id="PRO_0000043152" description="Presequence translocated-associated motor subunit PAM17, mitochondrial">
    <location>
        <begin position="31"/>
        <end position="186"/>
    </location>
</feature>
<feature type="transmembrane region" description="Helical" evidence="2">
    <location>
        <begin position="53"/>
        <end position="73"/>
    </location>
</feature>
<feature type="transmembrane region" description="Helical" evidence="2">
    <location>
        <begin position="83"/>
        <end position="103"/>
    </location>
</feature>
<reference key="1">
    <citation type="journal article" date="2004" name="Nature">
        <title>Genome evolution in yeasts.</title>
        <authorList>
            <person name="Dujon B."/>
            <person name="Sherman D."/>
            <person name="Fischer G."/>
            <person name="Durrens P."/>
            <person name="Casaregola S."/>
            <person name="Lafontaine I."/>
            <person name="de Montigny J."/>
            <person name="Marck C."/>
            <person name="Neuveglise C."/>
            <person name="Talla E."/>
            <person name="Goffard N."/>
            <person name="Frangeul L."/>
            <person name="Aigle M."/>
            <person name="Anthouard V."/>
            <person name="Babour A."/>
            <person name="Barbe V."/>
            <person name="Barnay S."/>
            <person name="Blanchin S."/>
            <person name="Beckerich J.-M."/>
            <person name="Beyne E."/>
            <person name="Bleykasten C."/>
            <person name="Boisrame A."/>
            <person name="Boyer J."/>
            <person name="Cattolico L."/>
            <person name="Confanioleri F."/>
            <person name="de Daruvar A."/>
            <person name="Despons L."/>
            <person name="Fabre E."/>
            <person name="Fairhead C."/>
            <person name="Ferry-Dumazet H."/>
            <person name="Groppi A."/>
            <person name="Hantraye F."/>
            <person name="Hennequin C."/>
            <person name="Jauniaux N."/>
            <person name="Joyet P."/>
            <person name="Kachouri R."/>
            <person name="Kerrest A."/>
            <person name="Koszul R."/>
            <person name="Lemaire M."/>
            <person name="Lesur I."/>
            <person name="Ma L."/>
            <person name="Muller H."/>
            <person name="Nicaud J.-M."/>
            <person name="Nikolski M."/>
            <person name="Oztas S."/>
            <person name="Ozier-Kalogeropoulos O."/>
            <person name="Pellenz S."/>
            <person name="Potier S."/>
            <person name="Richard G.-F."/>
            <person name="Straub M.-L."/>
            <person name="Suleau A."/>
            <person name="Swennen D."/>
            <person name="Tekaia F."/>
            <person name="Wesolowski-Louvel M."/>
            <person name="Westhof E."/>
            <person name="Wirth B."/>
            <person name="Zeniou-Meyer M."/>
            <person name="Zivanovic Y."/>
            <person name="Bolotin-Fukuhara M."/>
            <person name="Thierry A."/>
            <person name="Bouchier C."/>
            <person name="Caudron B."/>
            <person name="Scarpelli C."/>
            <person name="Gaillardin C."/>
            <person name="Weissenbach J."/>
            <person name="Wincker P."/>
            <person name="Souciet J.-L."/>
        </authorList>
    </citation>
    <scope>NUCLEOTIDE SEQUENCE [LARGE SCALE GENOMIC DNA]</scope>
    <source>
        <strain>ATCC 2001 / BCRC 20586 / JCM 3761 / NBRC 0622 / NRRL Y-65 / CBS 138</strain>
    </source>
</reference>
<organism>
    <name type="scientific">Candida glabrata (strain ATCC 2001 / BCRC 20586 / JCM 3761 / NBRC 0622 / NRRL Y-65 / CBS 138)</name>
    <name type="common">Yeast</name>
    <name type="synonym">Nakaseomyces glabratus</name>
    <dbReference type="NCBI Taxonomy" id="284593"/>
    <lineage>
        <taxon>Eukaryota</taxon>
        <taxon>Fungi</taxon>
        <taxon>Dikarya</taxon>
        <taxon>Ascomycota</taxon>
        <taxon>Saccharomycotina</taxon>
        <taxon>Saccharomycetes</taxon>
        <taxon>Saccharomycetales</taxon>
        <taxon>Saccharomycetaceae</taxon>
        <taxon>Nakaseomyces</taxon>
    </lineage>
</organism>